<gene>
    <name type="primary">Napb</name>
    <name type="synonym">Snapb</name>
</gene>
<organism>
    <name type="scientific">Mus musculus</name>
    <name type="common">Mouse</name>
    <dbReference type="NCBI Taxonomy" id="10090"/>
    <lineage>
        <taxon>Eukaryota</taxon>
        <taxon>Metazoa</taxon>
        <taxon>Chordata</taxon>
        <taxon>Craniata</taxon>
        <taxon>Vertebrata</taxon>
        <taxon>Euteleostomi</taxon>
        <taxon>Mammalia</taxon>
        <taxon>Eutheria</taxon>
        <taxon>Euarchontoglires</taxon>
        <taxon>Glires</taxon>
        <taxon>Rodentia</taxon>
        <taxon>Myomorpha</taxon>
        <taxon>Muroidea</taxon>
        <taxon>Muridae</taxon>
        <taxon>Murinae</taxon>
        <taxon>Mus</taxon>
        <taxon>Mus</taxon>
    </lineage>
</organism>
<feature type="chain" id="PRO_0000219061" description="Beta-soluble NSF attachment protein">
    <location>
        <begin position="1"/>
        <end position="298"/>
    </location>
</feature>
<dbReference type="EMBL" id="AK083184">
    <property type="protein sequence ID" value="BAC38798.1"/>
    <property type="molecule type" value="mRNA"/>
</dbReference>
<dbReference type="EMBL" id="BC038362">
    <property type="protein sequence ID" value="AAH38362.1"/>
    <property type="molecule type" value="mRNA"/>
</dbReference>
<dbReference type="EMBL" id="BC049874">
    <property type="protein sequence ID" value="AAH49874.1"/>
    <property type="molecule type" value="mRNA"/>
</dbReference>
<dbReference type="EMBL" id="X61455">
    <property type="protein sequence ID" value="CAA43695.1"/>
    <property type="molecule type" value="mRNA"/>
</dbReference>
<dbReference type="CCDS" id="CCDS16842.1"/>
<dbReference type="PIR" id="S16869">
    <property type="entry name" value="S16869"/>
</dbReference>
<dbReference type="RefSeq" id="NP_062606.1">
    <property type="nucleotide sequence ID" value="NM_019632.4"/>
</dbReference>
<dbReference type="SMR" id="P28663"/>
<dbReference type="BioGRID" id="201693">
    <property type="interactions" value="19"/>
</dbReference>
<dbReference type="FunCoup" id="P28663">
    <property type="interactions" value="1341"/>
</dbReference>
<dbReference type="IntAct" id="P28663">
    <property type="interactions" value="5"/>
</dbReference>
<dbReference type="MINT" id="P28663"/>
<dbReference type="STRING" id="10090.ENSMUSP00000028926"/>
<dbReference type="GlyGen" id="P28663">
    <property type="glycosylation" value="2 sites, 1 N-linked glycan (1 site), 1 O-linked glycan (1 site)"/>
</dbReference>
<dbReference type="iPTMnet" id="P28663"/>
<dbReference type="PhosphoSitePlus" id="P28663"/>
<dbReference type="SwissPalm" id="P28663"/>
<dbReference type="jPOST" id="P28663"/>
<dbReference type="PaxDb" id="10090-ENSMUSP00000028926"/>
<dbReference type="PeptideAtlas" id="P28663"/>
<dbReference type="ProteomicsDB" id="261284"/>
<dbReference type="Antibodypedia" id="42862">
    <property type="antibodies" value="107 antibodies from 21 providers"/>
</dbReference>
<dbReference type="DNASU" id="17957"/>
<dbReference type="Ensembl" id="ENSMUST00000028926.13">
    <property type="protein sequence ID" value="ENSMUSP00000028926.7"/>
    <property type="gene ID" value="ENSMUSG00000027438.15"/>
</dbReference>
<dbReference type="GeneID" id="17957"/>
<dbReference type="KEGG" id="mmu:17957"/>
<dbReference type="UCSC" id="uc008mti.1">
    <property type="organism name" value="mouse"/>
</dbReference>
<dbReference type="AGR" id="MGI:104562"/>
<dbReference type="CTD" id="63908"/>
<dbReference type="MGI" id="MGI:104562">
    <property type="gene designation" value="Napb"/>
</dbReference>
<dbReference type="VEuPathDB" id="HostDB:ENSMUSG00000027438"/>
<dbReference type="eggNOG" id="KOG1586">
    <property type="taxonomic scope" value="Eukaryota"/>
</dbReference>
<dbReference type="GeneTree" id="ENSGT00390000005826"/>
<dbReference type="HOGENOM" id="CLU_046329_0_1_1"/>
<dbReference type="InParanoid" id="P28663"/>
<dbReference type="OMA" id="EKAGNMY"/>
<dbReference type="OrthoDB" id="9984275at2759"/>
<dbReference type="PhylomeDB" id="P28663"/>
<dbReference type="TreeFam" id="TF316547"/>
<dbReference type="Reactome" id="R-MMU-204005">
    <property type="pathway name" value="COPII-mediated vesicle transport"/>
</dbReference>
<dbReference type="Reactome" id="R-MMU-6807878">
    <property type="pathway name" value="COPI-mediated anterograde transport"/>
</dbReference>
<dbReference type="Reactome" id="R-MMU-6811434">
    <property type="pathway name" value="COPI-dependent Golgi-to-ER retrograde traffic"/>
</dbReference>
<dbReference type="Reactome" id="R-MMU-6811438">
    <property type="pathway name" value="Intra-Golgi traffic"/>
</dbReference>
<dbReference type="Reactome" id="R-MMU-6811440">
    <property type="pathway name" value="Retrograde transport at the Trans-Golgi-Network"/>
</dbReference>
<dbReference type="BioGRID-ORCS" id="17957">
    <property type="hits" value="1 hit in 77 CRISPR screens"/>
</dbReference>
<dbReference type="CD-CODE" id="CE726F99">
    <property type="entry name" value="Postsynaptic density"/>
</dbReference>
<dbReference type="ChiTaRS" id="Napb">
    <property type="organism name" value="mouse"/>
</dbReference>
<dbReference type="PRO" id="PR:P28663"/>
<dbReference type="Proteomes" id="UP000000589">
    <property type="component" value="Chromosome 2"/>
</dbReference>
<dbReference type="RNAct" id="P28663">
    <property type="molecule type" value="protein"/>
</dbReference>
<dbReference type="Bgee" id="ENSMUSG00000027438">
    <property type="expression patterns" value="Expressed in pontine nuclear group and 216 other cell types or tissues"/>
</dbReference>
<dbReference type="ExpressionAtlas" id="P28663">
    <property type="expression patterns" value="baseline and differential"/>
</dbReference>
<dbReference type="GO" id="GO:0098978">
    <property type="term" value="C:glutamatergic synapse"/>
    <property type="evidence" value="ECO:0000314"/>
    <property type="project" value="SynGO"/>
</dbReference>
<dbReference type="GO" id="GO:0043209">
    <property type="term" value="C:myelin sheath"/>
    <property type="evidence" value="ECO:0007005"/>
    <property type="project" value="UniProtKB"/>
</dbReference>
<dbReference type="GO" id="GO:0070044">
    <property type="term" value="C:synaptobrevin 2-SNAP-25-syntaxin-1a complex"/>
    <property type="evidence" value="ECO:0000314"/>
    <property type="project" value="MGI"/>
</dbReference>
<dbReference type="GO" id="GO:0019905">
    <property type="term" value="F:syntaxin binding"/>
    <property type="evidence" value="ECO:0000314"/>
    <property type="project" value="MGI"/>
</dbReference>
<dbReference type="GO" id="GO:0006886">
    <property type="term" value="P:intracellular protein transport"/>
    <property type="evidence" value="ECO:0007669"/>
    <property type="project" value="InterPro"/>
</dbReference>
<dbReference type="GO" id="GO:0010807">
    <property type="term" value="P:regulation of synaptic vesicle priming"/>
    <property type="evidence" value="ECO:0000314"/>
    <property type="project" value="SynGO"/>
</dbReference>
<dbReference type="GO" id="GO:0035494">
    <property type="term" value="P:SNARE complex disassembly"/>
    <property type="evidence" value="ECO:0000316"/>
    <property type="project" value="MGI"/>
</dbReference>
<dbReference type="GO" id="GO:0035249">
    <property type="term" value="P:synaptic transmission, glutamatergic"/>
    <property type="evidence" value="ECO:0000316"/>
    <property type="project" value="MGI"/>
</dbReference>
<dbReference type="CDD" id="cd15832">
    <property type="entry name" value="SNAP"/>
    <property type="match status" value="1"/>
</dbReference>
<dbReference type="FunFam" id="1.25.40.10:FF:000028">
    <property type="entry name" value="beta-soluble NSF attachment protein-like isoform X1"/>
    <property type="match status" value="1"/>
</dbReference>
<dbReference type="Gene3D" id="1.25.40.10">
    <property type="entry name" value="Tetratricopeptide repeat domain"/>
    <property type="match status" value="1"/>
</dbReference>
<dbReference type="InterPro" id="IPR000744">
    <property type="entry name" value="NSF_attach"/>
</dbReference>
<dbReference type="InterPro" id="IPR011990">
    <property type="entry name" value="TPR-like_helical_dom_sf"/>
</dbReference>
<dbReference type="PANTHER" id="PTHR13768:SF12">
    <property type="entry name" value="BETA-SOLUBLE NSF ATTACHMENT PROTEIN"/>
    <property type="match status" value="1"/>
</dbReference>
<dbReference type="PANTHER" id="PTHR13768">
    <property type="entry name" value="SOLUBLE NSF ATTACHMENT PROTEIN SNAP"/>
    <property type="match status" value="1"/>
</dbReference>
<dbReference type="Pfam" id="PF14938">
    <property type="entry name" value="SNAP"/>
    <property type="match status" value="1"/>
</dbReference>
<dbReference type="PRINTS" id="PR00448">
    <property type="entry name" value="NSFATTACHMNT"/>
</dbReference>
<dbReference type="SUPFAM" id="SSF48452">
    <property type="entry name" value="TPR-like"/>
    <property type="match status" value="1"/>
</dbReference>
<comment type="function">
    <text>Required for vesicular transport between the endoplasmic reticulum and the Golgi apparatus.</text>
</comment>
<comment type="subunit">
    <text evidence="1">Interacts with PRKCABP, and disrupts the interaction between GRIA2 and PRKCABP, leading to the internalization of GRIA2.</text>
</comment>
<comment type="subcellular location">
    <subcellularLocation>
        <location>Membrane</location>
        <topology>Peripheral membrane protein</topology>
    </subcellularLocation>
</comment>
<comment type="tissue specificity">
    <text evidence="2">Cerebral cortex, cerebellar cortex, hippocampus, and dentate gyrus, weakly expressed in the putamen, the thalamus and the brain stem.</text>
</comment>
<comment type="similarity">
    <text evidence="3">Belongs to the SNAP family.</text>
</comment>
<reference key="1">
    <citation type="journal article" date="2005" name="Science">
        <title>The transcriptional landscape of the mammalian genome.</title>
        <authorList>
            <person name="Carninci P."/>
            <person name="Kasukawa T."/>
            <person name="Katayama S."/>
            <person name="Gough J."/>
            <person name="Frith M.C."/>
            <person name="Maeda N."/>
            <person name="Oyama R."/>
            <person name="Ravasi T."/>
            <person name="Lenhard B."/>
            <person name="Wells C."/>
            <person name="Kodzius R."/>
            <person name="Shimokawa K."/>
            <person name="Bajic V.B."/>
            <person name="Brenner S.E."/>
            <person name="Batalov S."/>
            <person name="Forrest A.R."/>
            <person name="Zavolan M."/>
            <person name="Davis M.J."/>
            <person name="Wilming L.G."/>
            <person name="Aidinis V."/>
            <person name="Allen J.E."/>
            <person name="Ambesi-Impiombato A."/>
            <person name="Apweiler R."/>
            <person name="Aturaliya R.N."/>
            <person name="Bailey T.L."/>
            <person name="Bansal M."/>
            <person name="Baxter L."/>
            <person name="Beisel K.W."/>
            <person name="Bersano T."/>
            <person name="Bono H."/>
            <person name="Chalk A.M."/>
            <person name="Chiu K.P."/>
            <person name="Choudhary V."/>
            <person name="Christoffels A."/>
            <person name="Clutterbuck D.R."/>
            <person name="Crowe M.L."/>
            <person name="Dalla E."/>
            <person name="Dalrymple B.P."/>
            <person name="de Bono B."/>
            <person name="Della Gatta G."/>
            <person name="di Bernardo D."/>
            <person name="Down T."/>
            <person name="Engstrom P."/>
            <person name="Fagiolini M."/>
            <person name="Faulkner G."/>
            <person name="Fletcher C.F."/>
            <person name="Fukushima T."/>
            <person name="Furuno M."/>
            <person name="Futaki S."/>
            <person name="Gariboldi M."/>
            <person name="Georgii-Hemming P."/>
            <person name="Gingeras T.R."/>
            <person name="Gojobori T."/>
            <person name="Green R.E."/>
            <person name="Gustincich S."/>
            <person name="Harbers M."/>
            <person name="Hayashi Y."/>
            <person name="Hensch T.K."/>
            <person name="Hirokawa N."/>
            <person name="Hill D."/>
            <person name="Huminiecki L."/>
            <person name="Iacono M."/>
            <person name="Ikeo K."/>
            <person name="Iwama A."/>
            <person name="Ishikawa T."/>
            <person name="Jakt M."/>
            <person name="Kanapin A."/>
            <person name="Katoh M."/>
            <person name="Kawasawa Y."/>
            <person name="Kelso J."/>
            <person name="Kitamura H."/>
            <person name="Kitano H."/>
            <person name="Kollias G."/>
            <person name="Krishnan S.P."/>
            <person name="Kruger A."/>
            <person name="Kummerfeld S.K."/>
            <person name="Kurochkin I.V."/>
            <person name="Lareau L.F."/>
            <person name="Lazarevic D."/>
            <person name="Lipovich L."/>
            <person name="Liu J."/>
            <person name="Liuni S."/>
            <person name="McWilliam S."/>
            <person name="Madan Babu M."/>
            <person name="Madera M."/>
            <person name="Marchionni L."/>
            <person name="Matsuda H."/>
            <person name="Matsuzawa S."/>
            <person name="Miki H."/>
            <person name="Mignone F."/>
            <person name="Miyake S."/>
            <person name="Morris K."/>
            <person name="Mottagui-Tabar S."/>
            <person name="Mulder N."/>
            <person name="Nakano N."/>
            <person name="Nakauchi H."/>
            <person name="Ng P."/>
            <person name="Nilsson R."/>
            <person name="Nishiguchi S."/>
            <person name="Nishikawa S."/>
            <person name="Nori F."/>
            <person name="Ohara O."/>
            <person name="Okazaki Y."/>
            <person name="Orlando V."/>
            <person name="Pang K.C."/>
            <person name="Pavan W.J."/>
            <person name="Pavesi G."/>
            <person name="Pesole G."/>
            <person name="Petrovsky N."/>
            <person name="Piazza S."/>
            <person name="Reed J."/>
            <person name="Reid J.F."/>
            <person name="Ring B.Z."/>
            <person name="Ringwald M."/>
            <person name="Rost B."/>
            <person name="Ruan Y."/>
            <person name="Salzberg S.L."/>
            <person name="Sandelin A."/>
            <person name="Schneider C."/>
            <person name="Schoenbach C."/>
            <person name="Sekiguchi K."/>
            <person name="Semple C.A."/>
            <person name="Seno S."/>
            <person name="Sessa L."/>
            <person name="Sheng Y."/>
            <person name="Shibata Y."/>
            <person name="Shimada H."/>
            <person name="Shimada K."/>
            <person name="Silva D."/>
            <person name="Sinclair B."/>
            <person name="Sperling S."/>
            <person name="Stupka E."/>
            <person name="Sugiura K."/>
            <person name="Sultana R."/>
            <person name="Takenaka Y."/>
            <person name="Taki K."/>
            <person name="Tammoja K."/>
            <person name="Tan S.L."/>
            <person name="Tang S."/>
            <person name="Taylor M.S."/>
            <person name="Tegner J."/>
            <person name="Teichmann S.A."/>
            <person name="Ueda H.R."/>
            <person name="van Nimwegen E."/>
            <person name="Verardo R."/>
            <person name="Wei C.L."/>
            <person name="Yagi K."/>
            <person name="Yamanishi H."/>
            <person name="Zabarovsky E."/>
            <person name="Zhu S."/>
            <person name="Zimmer A."/>
            <person name="Hide W."/>
            <person name="Bult C."/>
            <person name="Grimmond S.M."/>
            <person name="Teasdale R.D."/>
            <person name="Liu E.T."/>
            <person name="Brusic V."/>
            <person name="Quackenbush J."/>
            <person name="Wahlestedt C."/>
            <person name="Mattick J.S."/>
            <person name="Hume D.A."/>
            <person name="Kai C."/>
            <person name="Sasaki D."/>
            <person name="Tomaru Y."/>
            <person name="Fukuda S."/>
            <person name="Kanamori-Katayama M."/>
            <person name="Suzuki M."/>
            <person name="Aoki J."/>
            <person name="Arakawa T."/>
            <person name="Iida J."/>
            <person name="Imamura K."/>
            <person name="Itoh M."/>
            <person name="Kato T."/>
            <person name="Kawaji H."/>
            <person name="Kawagashira N."/>
            <person name="Kawashima T."/>
            <person name="Kojima M."/>
            <person name="Kondo S."/>
            <person name="Konno H."/>
            <person name="Nakano K."/>
            <person name="Ninomiya N."/>
            <person name="Nishio T."/>
            <person name="Okada M."/>
            <person name="Plessy C."/>
            <person name="Shibata K."/>
            <person name="Shiraki T."/>
            <person name="Suzuki S."/>
            <person name="Tagami M."/>
            <person name="Waki K."/>
            <person name="Watahiki A."/>
            <person name="Okamura-Oho Y."/>
            <person name="Suzuki H."/>
            <person name="Kawai J."/>
            <person name="Hayashizaki Y."/>
        </authorList>
    </citation>
    <scope>NUCLEOTIDE SEQUENCE [LARGE SCALE MRNA]</scope>
    <source>
        <strain>C57BL/6J</strain>
        <tissue>Hippocampus</tissue>
    </source>
</reference>
<reference key="2">
    <citation type="journal article" date="2004" name="Genome Res.">
        <title>The status, quality, and expansion of the NIH full-length cDNA project: the Mammalian Gene Collection (MGC).</title>
        <authorList>
            <consortium name="The MGC Project Team"/>
        </authorList>
    </citation>
    <scope>NUCLEOTIDE SEQUENCE [LARGE SCALE MRNA]</scope>
    <source>
        <tissue>Eye</tissue>
    </source>
</reference>
<reference key="3">
    <citation type="journal article" date="1990" name="Eur. J. Neurosci.">
        <title>A collection of cDNA clones with specific expression patterns in mouse brain.</title>
        <authorList>
            <person name="Kato K."/>
        </authorList>
    </citation>
    <scope>NUCLEOTIDE SEQUENCE [LARGE SCALE MRNA] OF 52-298</scope>
    <source>
        <strain>BALB/cJ</strain>
        <tissue>Brain</tissue>
    </source>
</reference>
<reference key="4">
    <citation type="submission" date="2007-03" db="UniProtKB">
        <authorList>
            <person name="Lubec G."/>
            <person name="Klug S."/>
        </authorList>
    </citation>
    <scope>PROTEIN SEQUENCE OF 123-140; 209-222 AND 228-239</scope>
    <scope>IDENTIFICATION BY MASS SPECTROMETRY</scope>
    <source>
        <tissue>Hippocampus</tissue>
    </source>
</reference>
<reference key="5">
    <citation type="journal article" date="1993" name="Nature">
        <title>SNAP family of NSF attachment proteins includes a brain-specific isoform.</title>
        <authorList>
            <person name="Whiteheart S.W."/>
            <person name="Griff I.C."/>
            <person name="Brunner M."/>
            <person name="Clary D.O."/>
            <person name="Mayer T."/>
            <person name="Buhrow S.A."/>
            <person name="Rothman J.E."/>
        </authorList>
    </citation>
    <scope>TISSUE SPECIFICITY</scope>
</reference>
<reference key="6">
    <citation type="journal article" date="2010" name="Cell">
        <title>A tissue-specific atlas of mouse protein phosphorylation and expression.</title>
        <authorList>
            <person name="Huttlin E.L."/>
            <person name="Jedrychowski M.P."/>
            <person name="Elias J.E."/>
            <person name="Goswami T."/>
            <person name="Rad R."/>
            <person name="Beausoleil S.A."/>
            <person name="Villen J."/>
            <person name="Haas W."/>
            <person name="Sowa M.E."/>
            <person name="Gygi S.P."/>
        </authorList>
    </citation>
    <scope>IDENTIFICATION BY MASS SPECTROMETRY [LARGE SCALE ANALYSIS]</scope>
    <source>
        <tissue>Brain</tissue>
    </source>
</reference>
<accession>P28663</accession>
<keyword id="KW-0903">Direct protein sequencing</keyword>
<keyword id="KW-0931">ER-Golgi transport</keyword>
<keyword id="KW-0472">Membrane</keyword>
<keyword id="KW-0653">Protein transport</keyword>
<keyword id="KW-1185">Reference proteome</keyword>
<keyword id="KW-0813">Transport</keyword>
<protein>
    <recommendedName>
        <fullName>Beta-soluble NSF attachment protein</fullName>
        <shortName>SNAP-beta</shortName>
    </recommendedName>
    <alternativeName>
        <fullName>Brain protein I47</fullName>
    </alternativeName>
    <alternativeName>
        <fullName>N-ethylmaleimide-sensitive factor attachment protein beta</fullName>
    </alternativeName>
</protein>
<proteinExistence type="evidence at protein level"/>
<sequence length="298" mass="33557">MDNAGKEREAVQLMAEAEKRVKASHSFLRGLFGGNTRIEEACEMYTRAANMFKMAKNWSAAGNAFCQAAKLHMQLQSKHDSATSFVDAGNAYKKADPQEAINCLNAAIDIYTDMGRFTIAAKHHITIAEIYETELVDIEKAIAHYEQSADYYKGEESNSSANKCLLKVAAYAAQLEQYQKAIEIYEQVGANTMDNPLLKYSAKDYFFKAALCHFIVDELNAKLALEKYEEMFPAFTDSRECKLLKKLLEAHEEQNSEAYTEAVKEFDSISRLDQWLTTMLLRIKKSIQGDGEGDGDLK</sequence>
<evidence type="ECO:0000250" key="1"/>
<evidence type="ECO:0000269" key="2">
    <source>
    </source>
</evidence>
<evidence type="ECO:0000305" key="3"/>
<name>SNAB_MOUSE</name>